<name>MDH_CORJK</name>
<accession>Q4JWV0</accession>
<sequence>MTTNNQNAVTVTVTGAGGQIGYSLLFRIAKGEVFGDRVVNLRLLETEQGVQAARGVALELADCAFPLLGEVSITTELSEGFKDANAVFLVGAKPRQKGEERADLLAANGKIFGPQGKAIAEYAADDVRVIVVGNPANTNAAIVAAHAEGLDPRRVTALTRLDHNRGLAQVADKLGVAVRDLKNMTVWGNHSASQFPDVAELTLNGEKVADKLDAAWVNDEFIPRVAKRGAEIIEVRGRSSAASAASAALDHMRDWVNGTAEGDWVSVALPSDGSYGIPEGLVFSFPCRSVDGEWEIVQGLEISPAQQERIDANIKELQEEKAAVEEAGLL</sequence>
<gene>
    <name evidence="1" type="primary">mdh</name>
    <name type="ordered locus">jk0548</name>
</gene>
<reference key="1">
    <citation type="journal article" date="2005" name="J. Bacteriol.">
        <title>Complete genome sequence and analysis of the multiresistant nosocomial pathogen Corynebacterium jeikeium K411, a lipid-requiring bacterium of the human skin flora.</title>
        <authorList>
            <person name="Tauch A."/>
            <person name="Kaiser O."/>
            <person name="Hain T."/>
            <person name="Goesmann A."/>
            <person name="Weisshaar B."/>
            <person name="Albersmeier A."/>
            <person name="Bekel T."/>
            <person name="Bischoff N."/>
            <person name="Brune I."/>
            <person name="Chakraborty T."/>
            <person name="Kalinowski J."/>
            <person name="Meyer F."/>
            <person name="Rupp O."/>
            <person name="Schneiker S."/>
            <person name="Viehoever P."/>
            <person name="Puehler A."/>
        </authorList>
    </citation>
    <scope>NUCLEOTIDE SEQUENCE [LARGE SCALE GENOMIC DNA]</scope>
    <source>
        <strain>K411</strain>
    </source>
</reference>
<evidence type="ECO:0000255" key="1">
    <source>
        <dbReference type="HAMAP-Rule" id="MF_01517"/>
    </source>
</evidence>
<keyword id="KW-0520">NAD</keyword>
<keyword id="KW-0560">Oxidoreductase</keyword>
<keyword id="KW-1185">Reference proteome</keyword>
<keyword id="KW-0816">Tricarboxylic acid cycle</keyword>
<proteinExistence type="inferred from homology"/>
<comment type="function">
    <text evidence="1">Catalyzes the reversible oxidation of malate to oxaloacetate.</text>
</comment>
<comment type="catalytic activity">
    <reaction evidence="1">
        <text>(S)-malate + NAD(+) = oxaloacetate + NADH + H(+)</text>
        <dbReference type="Rhea" id="RHEA:21432"/>
        <dbReference type="ChEBI" id="CHEBI:15378"/>
        <dbReference type="ChEBI" id="CHEBI:15589"/>
        <dbReference type="ChEBI" id="CHEBI:16452"/>
        <dbReference type="ChEBI" id="CHEBI:57540"/>
        <dbReference type="ChEBI" id="CHEBI:57945"/>
        <dbReference type="EC" id="1.1.1.37"/>
    </reaction>
</comment>
<comment type="similarity">
    <text evidence="1">Belongs to the LDH/MDH superfamily. MDH type 2 family.</text>
</comment>
<protein>
    <recommendedName>
        <fullName evidence="1">Malate dehydrogenase</fullName>
        <ecNumber evidence="1">1.1.1.37</ecNumber>
    </recommendedName>
</protein>
<feature type="chain" id="PRO_0000113365" description="Malate dehydrogenase">
    <location>
        <begin position="1"/>
        <end position="330"/>
    </location>
</feature>
<feature type="active site" description="Proton acceptor" evidence="1">
    <location>
        <position position="190"/>
    </location>
</feature>
<feature type="binding site" evidence="1">
    <location>
        <begin position="15"/>
        <end position="21"/>
    </location>
    <ligand>
        <name>NAD(+)</name>
        <dbReference type="ChEBI" id="CHEBI:57540"/>
    </ligand>
</feature>
<feature type="binding site" evidence="1">
    <location>
        <position position="95"/>
    </location>
    <ligand>
        <name>substrate</name>
    </ligand>
</feature>
<feature type="binding site" evidence="1">
    <location>
        <position position="101"/>
    </location>
    <ligand>
        <name>substrate</name>
    </ligand>
</feature>
<feature type="binding site" evidence="1">
    <location>
        <position position="108"/>
    </location>
    <ligand>
        <name>NAD(+)</name>
        <dbReference type="ChEBI" id="CHEBI:57540"/>
    </ligand>
</feature>
<feature type="binding site" evidence="1">
    <location>
        <position position="115"/>
    </location>
    <ligand>
        <name>NAD(+)</name>
        <dbReference type="ChEBI" id="CHEBI:57540"/>
    </ligand>
</feature>
<feature type="binding site" evidence="1">
    <location>
        <begin position="132"/>
        <end position="134"/>
    </location>
    <ligand>
        <name>NAD(+)</name>
        <dbReference type="ChEBI" id="CHEBI:57540"/>
    </ligand>
</feature>
<feature type="binding site" evidence="1">
    <location>
        <position position="134"/>
    </location>
    <ligand>
        <name>substrate</name>
    </ligand>
</feature>
<feature type="binding site" evidence="1">
    <location>
        <position position="165"/>
    </location>
    <ligand>
        <name>substrate</name>
    </ligand>
</feature>
<organism>
    <name type="scientific">Corynebacterium jeikeium (strain K411)</name>
    <dbReference type="NCBI Taxonomy" id="306537"/>
    <lineage>
        <taxon>Bacteria</taxon>
        <taxon>Bacillati</taxon>
        <taxon>Actinomycetota</taxon>
        <taxon>Actinomycetes</taxon>
        <taxon>Mycobacteriales</taxon>
        <taxon>Corynebacteriaceae</taxon>
        <taxon>Corynebacterium</taxon>
    </lineage>
</organism>
<dbReference type="EC" id="1.1.1.37" evidence="1"/>
<dbReference type="EMBL" id="CR931997">
    <property type="protein sequence ID" value="CAI36707.1"/>
    <property type="molecule type" value="Genomic_DNA"/>
</dbReference>
<dbReference type="RefSeq" id="WP_011273212.1">
    <property type="nucleotide sequence ID" value="NC_007164.1"/>
</dbReference>
<dbReference type="SMR" id="Q4JWV0"/>
<dbReference type="STRING" id="306537.jk0548"/>
<dbReference type="KEGG" id="cjk:jk0548"/>
<dbReference type="PATRIC" id="fig|306537.10.peg.560"/>
<dbReference type="eggNOG" id="COG0039">
    <property type="taxonomic scope" value="Bacteria"/>
</dbReference>
<dbReference type="HOGENOM" id="CLU_040727_2_0_11"/>
<dbReference type="OrthoDB" id="9802969at2"/>
<dbReference type="Proteomes" id="UP000000545">
    <property type="component" value="Chromosome"/>
</dbReference>
<dbReference type="GO" id="GO:0030060">
    <property type="term" value="F:L-malate dehydrogenase (NAD+) activity"/>
    <property type="evidence" value="ECO:0007669"/>
    <property type="project" value="UniProtKB-UniRule"/>
</dbReference>
<dbReference type="GO" id="GO:0006108">
    <property type="term" value="P:malate metabolic process"/>
    <property type="evidence" value="ECO:0007669"/>
    <property type="project" value="InterPro"/>
</dbReference>
<dbReference type="GO" id="GO:0006099">
    <property type="term" value="P:tricarboxylic acid cycle"/>
    <property type="evidence" value="ECO:0007669"/>
    <property type="project" value="UniProtKB-UniRule"/>
</dbReference>
<dbReference type="CDD" id="cd01338">
    <property type="entry name" value="MDH_chloroplast-like"/>
    <property type="match status" value="1"/>
</dbReference>
<dbReference type="FunFam" id="3.40.50.720:FF:000010">
    <property type="entry name" value="Malate dehydrogenase"/>
    <property type="match status" value="1"/>
</dbReference>
<dbReference type="FunFam" id="3.90.110.10:FF:000002">
    <property type="entry name" value="Malate dehydrogenase"/>
    <property type="match status" value="1"/>
</dbReference>
<dbReference type="Gene3D" id="3.90.110.10">
    <property type="entry name" value="Lactate dehydrogenase/glycoside hydrolase, family 4, C-terminal"/>
    <property type="match status" value="1"/>
</dbReference>
<dbReference type="Gene3D" id="3.40.50.720">
    <property type="entry name" value="NAD(P)-binding Rossmann-like Domain"/>
    <property type="match status" value="1"/>
</dbReference>
<dbReference type="HAMAP" id="MF_01517">
    <property type="entry name" value="Malate_dehydrog_2"/>
    <property type="match status" value="1"/>
</dbReference>
<dbReference type="InterPro" id="IPR001557">
    <property type="entry name" value="L-lactate/malate_DH"/>
</dbReference>
<dbReference type="InterPro" id="IPR022383">
    <property type="entry name" value="Lactate/malate_DH_C"/>
</dbReference>
<dbReference type="InterPro" id="IPR001236">
    <property type="entry name" value="Lactate/malate_DH_N"/>
</dbReference>
<dbReference type="InterPro" id="IPR015955">
    <property type="entry name" value="Lactate_DH/Glyco_Ohase_4_C"/>
</dbReference>
<dbReference type="InterPro" id="IPR010945">
    <property type="entry name" value="Malate_DH_type2"/>
</dbReference>
<dbReference type="InterPro" id="IPR036291">
    <property type="entry name" value="NAD(P)-bd_dom_sf"/>
</dbReference>
<dbReference type="NCBIfam" id="TIGR01759">
    <property type="entry name" value="MalateDH-SF1"/>
    <property type="match status" value="1"/>
</dbReference>
<dbReference type="NCBIfam" id="NF003916">
    <property type="entry name" value="PRK05442.1"/>
    <property type="match status" value="1"/>
</dbReference>
<dbReference type="PANTHER" id="PTHR23382">
    <property type="entry name" value="MALATE DEHYDROGENASE"/>
    <property type="match status" value="1"/>
</dbReference>
<dbReference type="Pfam" id="PF02866">
    <property type="entry name" value="Ldh_1_C"/>
    <property type="match status" value="1"/>
</dbReference>
<dbReference type="Pfam" id="PF00056">
    <property type="entry name" value="Ldh_1_N"/>
    <property type="match status" value="1"/>
</dbReference>
<dbReference type="PIRSF" id="PIRSF000102">
    <property type="entry name" value="Lac_mal_DH"/>
    <property type="match status" value="1"/>
</dbReference>
<dbReference type="SUPFAM" id="SSF56327">
    <property type="entry name" value="LDH C-terminal domain-like"/>
    <property type="match status" value="1"/>
</dbReference>
<dbReference type="SUPFAM" id="SSF51735">
    <property type="entry name" value="NAD(P)-binding Rossmann-fold domains"/>
    <property type="match status" value="1"/>
</dbReference>